<dbReference type="EMBL" id="AF217829">
    <property type="protein sequence ID" value="AAF37248.1"/>
    <property type="molecule type" value="Genomic_DNA"/>
</dbReference>
<dbReference type="SMR" id="Q9MLJ9"/>
<dbReference type="GO" id="GO:0005743">
    <property type="term" value="C:mitochondrial inner membrane"/>
    <property type="evidence" value="ECO:0007669"/>
    <property type="project" value="UniProtKB-SubCell"/>
</dbReference>
<dbReference type="GO" id="GO:0045275">
    <property type="term" value="C:respiratory chain complex III"/>
    <property type="evidence" value="ECO:0007669"/>
    <property type="project" value="InterPro"/>
</dbReference>
<dbReference type="GO" id="GO:0046872">
    <property type="term" value="F:metal ion binding"/>
    <property type="evidence" value="ECO:0007669"/>
    <property type="project" value="UniProtKB-KW"/>
</dbReference>
<dbReference type="GO" id="GO:0008121">
    <property type="term" value="F:ubiquinol-cytochrome-c reductase activity"/>
    <property type="evidence" value="ECO:0007669"/>
    <property type="project" value="InterPro"/>
</dbReference>
<dbReference type="GO" id="GO:0006122">
    <property type="term" value="P:mitochondrial electron transport, ubiquinol to cytochrome c"/>
    <property type="evidence" value="ECO:0007669"/>
    <property type="project" value="TreeGrafter"/>
</dbReference>
<dbReference type="CDD" id="cd00290">
    <property type="entry name" value="cytochrome_b_C"/>
    <property type="match status" value="1"/>
</dbReference>
<dbReference type="CDD" id="cd00284">
    <property type="entry name" value="Cytochrome_b_N"/>
    <property type="match status" value="1"/>
</dbReference>
<dbReference type="Gene3D" id="1.20.810.10">
    <property type="entry name" value="Cytochrome Bc1 Complex, Chain C"/>
    <property type="match status" value="1"/>
</dbReference>
<dbReference type="InterPro" id="IPR005798">
    <property type="entry name" value="Cyt_b/b6_C"/>
</dbReference>
<dbReference type="InterPro" id="IPR036150">
    <property type="entry name" value="Cyt_b/b6_C_sf"/>
</dbReference>
<dbReference type="InterPro" id="IPR005797">
    <property type="entry name" value="Cyt_b/b6_N"/>
</dbReference>
<dbReference type="InterPro" id="IPR027387">
    <property type="entry name" value="Cytb/b6-like_sf"/>
</dbReference>
<dbReference type="InterPro" id="IPR030689">
    <property type="entry name" value="Cytochrome_b"/>
</dbReference>
<dbReference type="InterPro" id="IPR048260">
    <property type="entry name" value="Cytochrome_b_C_euk/bac"/>
</dbReference>
<dbReference type="InterPro" id="IPR048259">
    <property type="entry name" value="Cytochrome_b_N_euk/bac"/>
</dbReference>
<dbReference type="InterPro" id="IPR016174">
    <property type="entry name" value="Di-haem_cyt_TM"/>
</dbReference>
<dbReference type="PANTHER" id="PTHR19271">
    <property type="entry name" value="CYTOCHROME B"/>
    <property type="match status" value="1"/>
</dbReference>
<dbReference type="PANTHER" id="PTHR19271:SF16">
    <property type="entry name" value="CYTOCHROME B"/>
    <property type="match status" value="1"/>
</dbReference>
<dbReference type="Pfam" id="PF00032">
    <property type="entry name" value="Cytochrom_B_C"/>
    <property type="match status" value="1"/>
</dbReference>
<dbReference type="Pfam" id="PF00033">
    <property type="entry name" value="Cytochrome_B"/>
    <property type="match status" value="1"/>
</dbReference>
<dbReference type="PIRSF" id="PIRSF038885">
    <property type="entry name" value="COB"/>
    <property type="match status" value="1"/>
</dbReference>
<dbReference type="SUPFAM" id="SSF81648">
    <property type="entry name" value="a domain/subunit of cytochrome bc1 complex (Ubiquinol-cytochrome c reductase)"/>
    <property type="match status" value="1"/>
</dbReference>
<dbReference type="SUPFAM" id="SSF81342">
    <property type="entry name" value="Transmembrane di-heme cytochromes"/>
    <property type="match status" value="1"/>
</dbReference>
<dbReference type="PROSITE" id="PS51003">
    <property type="entry name" value="CYTB_CTER"/>
    <property type="match status" value="1"/>
</dbReference>
<dbReference type="PROSITE" id="PS51002">
    <property type="entry name" value="CYTB_NTER"/>
    <property type="match status" value="1"/>
</dbReference>
<reference key="1">
    <citation type="journal article" date="2000" name="Mol. Phylogenet. Evol.">
        <title>Phylogenetic relationships of elapid snakes based on cytochrome b mtDNA sequences.</title>
        <authorList>
            <person name="Slowinski J.B."/>
            <person name="Keogh J.S."/>
        </authorList>
    </citation>
    <scope>NUCLEOTIDE SEQUENCE [GENOMIC DNA]</scope>
</reference>
<accession>Q9MLJ9</accession>
<evidence type="ECO:0000250" key="1"/>
<evidence type="ECO:0000250" key="2">
    <source>
        <dbReference type="UniProtKB" id="P00157"/>
    </source>
</evidence>
<evidence type="ECO:0000255" key="3">
    <source>
        <dbReference type="PROSITE-ProRule" id="PRU00967"/>
    </source>
</evidence>
<evidence type="ECO:0000255" key="4">
    <source>
        <dbReference type="PROSITE-ProRule" id="PRU00968"/>
    </source>
</evidence>
<protein>
    <recommendedName>
        <fullName>Cytochrome b</fullName>
    </recommendedName>
    <alternativeName>
        <fullName>Complex III subunit 3</fullName>
    </alternativeName>
    <alternativeName>
        <fullName>Complex III subunit III</fullName>
    </alternativeName>
    <alternativeName>
        <fullName>Cytochrome b-c1 complex subunit 3</fullName>
    </alternativeName>
    <alternativeName>
        <fullName>Ubiquinol-cytochrome-c reductase complex cytochrome b subunit</fullName>
    </alternativeName>
</protein>
<feature type="chain" id="PRO_0000060685" description="Cytochrome b">
    <location>
        <begin position="1"/>
        <end position="372"/>
    </location>
</feature>
<feature type="transmembrane region" description="Helical" evidence="2">
    <location>
        <begin position="25"/>
        <end position="45"/>
    </location>
</feature>
<feature type="transmembrane region" description="Helical" evidence="2">
    <location>
        <begin position="69"/>
        <end position="90"/>
    </location>
</feature>
<feature type="transmembrane region" description="Helical" evidence="2">
    <location>
        <begin position="105"/>
        <end position="125"/>
    </location>
</feature>
<feature type="transmembrane region" description="Helical" evidence="2">
    <location>
        <begin position="170"/>
        <end position="190"/>
    </location>
</feature>
<feature type="transmembrane region" description="Helical" evidence="2">
    <location>
        <begin position="218"/>
        <end position="238"/>
    </location>
</feature>
<feature type="transmembrane region" description="Helical" evidence="2">
    <location>
        <begin position="280"/>
        <end position="300"/>
    </location>
</feature>
<feature type="transmembrane region" description="Helical" evidence="2">
    <location>
        <begin position="312"/>
        <end position="332"/>
    </location>
</feature>
<feature type="transmembrane region" description="Helical" evidence="2">
    <location>
        <begin position="339"/>
        <end position="358"/>
    </location>
</feature>
<feature type="binding site" description="axial binding residue" evidence="2">
    <location>
        <position position="75"/>
    </location>
    <ligand>
        <name>heme b</name>
        <dbReference type="ChEBI" id="CHEBI:60344"/>
        <label>b562</label>
    </ligand>
    <ligandPart>
        <name>Fe</name>
        <dbReference type="ChEBI" id="CHEBI:18248"/>
    </ligandPart>
</feature>
<feature type="binding site" description="axial binding residue" evidence="2">
    <location>
        <position position="89"/>
    </location>
    <ligand>
        <name>heme b</name>
        <dbReference type="ChEBI" id="CHEBI:60344"/>
        <label>b566</label>
    </ligand>
    <ligandPart>
        <name>Fe</name>
        <dbReference type="ChEBI" id="CHEBI:18248"/>
    </ligandPart>
</feature>
<feature type="binding site" description="axial binding residue" evidence="2">
    <location>
        <position position="174"/>
    </location>
    <ligand>
        <name>heme b</name>
        <dbReference type="ChEBI" id="CHEBI:60344"/>
        <label>b562</label>
    </ligand>
    <ligandPart>
        <name>Fe</name>
        <dbReference type="ChEBI" id="CHEBI:18248"/>
    </ligandPart>
</feature>
<feature type="binding site" description="axial binding residue" evidence="2">
    <location>
        <position position="188"/>
    </location>
    <ligand>
        <name>heme b</name>
        <dbReference type="ChEBI" id="CHEBI:60344"/>
        <label>b566</label>
    </ligand>
    <ligandPart>
        <name>Fe</name>
        <dbReference type="ChEBI" id="CHEBI:18248"/>
    </ligandPart>
</feature>
<feature type="binding site" evidence="2">
    <location>
        <position position="193"/>
    </location>
    <ligand>
        <name>a ubiquinone</name>
        <dbReference type="ChEBI" id="CHEBI:16389"/>
    </ligand>
</feature>
<name>CYB_NAJAN</name>
<sequence>MSNQHTLLMSNLLPVGSNISTWWNFGSMLLTCLMLQITTGFFLAIHYTANINLAFSSVIHITRDVPYGWIMQNLHAISASMFFICIYIHIARGLYYGLYLNKEVWLSGTALLITLMATAFFGYVLPWGQMSFWAATVITNLLTAIPYLGTMLTTWLWGGFSINDPTLTRFFALHFILPFAIMALSSIHIILLHNEGSNNPLGTNSDIDKIPFHPYHSYKDMLMFTSMITLLFITLSFSPDLLNYPENFSKANPLVTPQHIKPEWYFLFAYGILRSIPNKLGGALALLMSVMILTTVPFTHTSYTRSMMFRPLSQILFWTLMATFITITWTASKPVEPPFISISQTTSIFYFSFFITIPLLGWTENKIMMMNN</sequence>
<gene>
    <name type="primary">MT-CYB</name>
    <name type="synonym">COB</name>
    <name type="synonym">CYTB</name>
    <name type="synonym">MTCYB</name>
</gene>
<comment type="function">
    <text evidence="2">Component of the ubiquinol-cytochrome c reductase complex (complex III or cytochrome b-c1 complex) that is part of the mitochondrial respiratory chain. The b-c1 complex mediates electron transfer from ubiquinol to cytochrome c. Contributes to the generation of a proton gradient across the mitochondrial membrane that is then used for ATP synthesis.</text>
</comment>
<comment type="cofactor">
    <cofactor evidence="2">
        <name>heme b</name>
        <dbReference type="ChEBI" id="CHEBI:60344"/>
    </cofactor>
    <text evidence="2">Binds 2 heme b groups non-covalently.</text>
</comment>
<comment type="subunit">
    <text evidence="2">The cytochrome bc1 complex contains 3 respiratory subunits (MT-CYB, CYC1 and UQCRFS1), 2 core proteins (UQCRC1 and UQCRC2) and probably 6 low-molecular weight proteins.</text>
</comment>
<comment type="subcellular location">
    <subcellularLocation>
        <location evidence="2">Mitochondrion inner membrane</location>
        <topology evidence="2">Multi-pass membrane protein</topology>
    </subcellularLocation>
</comment>
<comment type="miscellaneous">
    <text evidence="1">Heme 1 (or BL or b562) is low-potential and absorbs at about 562 nm, and heme 2 (or BH or b566) is high-potential and absorbs at about 566 nm.</text>
</comment>
<comment type="similarity">
    <text evidence="3 4">Belongs to the cytochrome b family.</text>
</comment>
<comment type="caution">
    <text evidence="2">The full-length protein contains only eight transmembrane helices, not nine as predicted by bioinformatics tools.</text>
</comment>
<geneLocation type="mitochondrion"/>
<organism>
    <name type="scientific">Naja annulata annulata</name>
    <name type="common">Banded water cobra</name>
    <name type="synonym">Boulengerina annulata annulata</name>
    <dbReference type="NCBI Taxonomy" id="8610"/>
    <lineage>
        <taxon>Eukaryota</taxon>
        <taxon>Metazoa</taxon>
        <taxon>Chordata</taxon>
        <taxon>Craniata</taxon>
        <taxon>Vertebrata</taxon>
        <taxon>Euteleostomi</taxon>
        <taxon>Lepidosauria</taxon>
        <taxon>Squamata</taxon>
        <taxon>Bifurcata</taxon>
        <taxon>Unidentata</taxon>
        <taxon>Episquamata</taxon>
        <taxon>Toxicofera</taxon>
        <taxon>Serpentes</taxon>
        <taxon>Colubroidea</taxon>
        <taxon>Elapidae</taxon>
        <taxon>Elapinae</taxon>
        <taxon>Naja</taxon>
    </lineage>
</organism>
<proteinExistence type="inferred from homology"/>
<keyword id="KW-0249">Electron transport</keyword>
<keyword id="KW-0349">Heme</keyword>
<keyword id="KW-0408">Iron</keyword>
<keyword id="KW-0472">Membrane</keyword>
<keyword id="KW-0479">Metal-binding</keyword>
<keyword id="KW-0496">Mitochondrion</keyword>
<keyword id="KW-0999">Mitochondrion inner membrane</keyword>
<keyword id="KW-0679">Respiratory chain</keyword>
<keyword id="KW-0812">Transmembrane</keyword>
<keyword id="KW-1133">Transmembrane helix</keyword>
<keyword id="KW-0813">Transport</keyword>
<keyword id="KW-0830">Ubiquinone</keyword>